<proteinExistence type="evidence at transcript level"/>
<organism>
    <name type="scientific">Mus musculus</name>
    <name type="common">Mouse</name>
    <dbReference type="NCBI Taxonomy" id="10090"/>
    <lineage>
        <taxon>Eukaryota</taxon>
        <taxon>Metazoa</taxon>
        <taxon>Chordata</taxon>
        <taxon>Craniata</taxon>
        <taxon>Vertebrata</taxon>
        <taxon>Euteleostomi</taxon>
        <taxon>Mammalia</taxon>
        <taxon>Eutheria</taxon>
        <taxon>Euarchontoglires</taxon>
        <taxon>Glires</taxon>
        <taxon>Rodentia</taxon>
        <taxon>Myomorpha</taxon>
        <taxon>Muroidea</taxon>
        <taxon>Muridae</taxon>
        <taxon>Murinae</taxon>
        <taxon>Mus</taxon>
        <taxon>Mus</taxon>
    </lineage>
</organism>
<sequence length="152" mass="16658">MAVALPEVVEELLSEMAAAVRDSARIPDELLLSLEFVFGSSAIQALDLVDRESVTLISSPSGRRVYQVLGSSGKTYTCLASCHYCSCPAFSFSVLRKSDSLLCKHLLAIYLSQLLRNCQQLHVSDKQLTDLLMEDTRRIKGAAGTWTSKTEA</sequence>
<keyword id="KW-0227">DNA damage</keyword>
<keyword id="KW-0233">DNA recombination</keyword>
<keyword id="KW-0234">DNA repair</keyword>
<keyword id="KW-0479">Metal-binding</keyword>
<keyword id="KW-0539">Nucleus</keyword>
<keyword id="KW-1185">Reference proteome</keyword>
<keyword id="KW-0862">Zinc</keyword>
<keyword id="KW-0863">Zinc-finger</keyword>
<protein>
    <recommendedName>
        <fullName>Zinc finger SWIM domain-containing protein 7</fullName>
    </recommendedName>
    <alternativeName>
        <fullName>SWIM domain-containing and Srs2-interacting protein 1 homolog</fullName>
    </alternativeName>
</protein>
<reference key="1">
    <citation type="journal article" date="2005" name="Science">
        <title>The transcriptional landscape of the mammalian genome.</title>
        <authorList>
            <person name="Carninci P."/>
            <person name="Kasukawa T."/>
            <person name="Katayama S."/>
            <person name="Gough J."/>
            <person name="Frith M.C."/>
            <person name="Maeda N."/>
            <person name="Oyama R."/>
            <person name="Ravasi T."/>
            <person name="Lenhard B."/>
            <person name="Wells C."/>
            <person name="Kodzius R."/>
            <person name="Shimokawa K."/>
            <person name="Bajic V.B."/>
            <person name="Brenner S.E."/>
            <person name="Batalov S."/>
            <person name="Forrest A.R."/>
            <person name="Zavolan M."/>
            <person name="Davis M.J."/>
            <person name="Wilming L.G."/>
            <person name="Aidinis V."/>
            <person name="Allen J.E."/>
            <person name="Ambesi-Impiombato A."/>
            <person name="Apweiler R."/>
            <person name="Aturaliya R.N."/>
            <person name="Bailey T.L."/>
            <person name="Bansal M."/>
            <person name="Baxter L."/>
            <person name="Beisel K.W."/>
            <person name="Bersano T."/>
            <person name="Bono H."/>
            <person name="Chalk A.M."/>
            <person name="Chiu K.P."/>
            <person name="Choudhary V."/>
            <person name="Christoffels A."/>
            <person name="Clutterbuck D.R."/>
            <person name="Crowe M.L."/>
            <person name="Dalla E."/>
            <person name="Dalrymple B.P."/>
            <person name="de Bono B."/>
            <person name="Della Gatta G."/>
            <person name="di Bernardo D."/>
            <person name="Down T."/>
            <person name="Engstrom P."/>
            <person name="Fagiolini M."/>
            <person name="Faulkner G."/>
            <person name="Fletcher C.F."/>
            <person name="Fukushima T."/>
            <person name="Furuno M."/>
            <person name="Futaki S."/>
            <person name="Gariboldi M."/>
            <person name="Georgii-Hemming P."/>
            <person name="Gingeras T.R."/>
            <person name="Gojobori T."/>
            <person name="Green R.E."/>
            <person name="Gustincich S."/>
            <person name="Harbers M."/>
            <person name="Hayashi Y."/>
            <person name="Hensch T.K."/>
            <person name="Hirokawa N."/>
            <person name="Hill D."/>
            <person name="Huminiecki L."/>
            <person name="Iacono M."/>
            <person name="Ikeo K."/>
            <person name="Iwama A."/>
            <person name="Ishikawa T."/>
            <person name="Jakt M."/>
            <person name="Kanapin A."/>
            <person name="Katoh M."/>
            <person name="Kawasawa Y."/>
            <person name="Kelso J."/>
            <person name="Kitamura H."/>
            <person name="Kitano H."/>
            <person name="Kollias G."/>
            <person name="Krishnan S.P."/>
            <person name="Kruger A."/>
            <person name="Kummerfeld S.K."/>
            <person name="Kurochkin I.V."/>
            <person name="Lareau L.F."/>
            <person name="Lazarevic D."/>
            <person name="Lipovich L."/>
            <person name="Liu J."/>
            <person name="Liuni S."/>
            <person name="McWilliam S."/>
            <person name="Madan Babu M."/>
            <person name="Madera M."/>
            <person name="Marchionni L."/>
            <person name="Matsuda H."/>
            <person name="Matsuzawa S."/>
            <person name="Miki H."/>
            <person name="Mignone F."/>
            <person name="Miyake S."/>
            <person name="Morris K."/>
            <person name="Mottagui-Tabar S."/>
            <person name="Mulder N."/>
            <person name="Nakano N."/>
            <person name="Nakauchi H."/>
            <person name="Ng P."/>
            <person name="Nilsson R."/>
            <person name="Nishiguchi S."/>
            <person name="Nishikawa S."/>
            <person name="Nori F."/>
            <person name="Ohara O."/>
            <person name="Okazaki Y."/>
            <person name="Orlando V."/>
            <person name="Pang K.C."/>
            <person name="Pavan W.J."/>
            <person name="Pavesi G."/>
            <person name="Pesole G."/>
            <person name="Petrovsky N."/>
            <person name="Piazza S."/>
            <person name="Reed J."/>
            <person name="Reid J.F."/>
            <person name="Ring B.Z."/>
            <person name="Ringwald M."/>
            <person name="Rost B."/>
            <person name="Ruan Y."/>
            <person name="Salzberg S.L."/>
            <person name="Sandelin A."/>
            <person name="Schneider C."/>
            <person name="Schoenbach C."/>
            <person name="Sekiguchi K."/>
            <person name="Semple C.A."/>
            <person name="Seno S."/>
            <person name="Sessa L."/>
            <person name="Sheng Y."/>
            <person name="Shibata Y."/>
            <person name="Shimada H."/>
            <person name="Shimada K."/>
            <person name="Silva D."/>
            <person name="Sinclair B."/>
            <person name="Sperling S."/>
            <person name="Stupka E."/>
            <person name="Sugiura K."/>
            <person name="Sultana R."/>
            <person name="Takenaka Y."/>
            <person name="Taki K."/>
            <person name="Tammoja K."/>
            <person name="Tan S.L."/>
            <person name="Tang S."/>
            <person name="Taylor M.S."/>
            <person name="Tegner J."/>
            <person name="Teichmann S.A."/>
            <person name="Ueda H.R."/>
            <person name="van Nimwegen E."/>
            <person name="Verardo R."/>
            <person name="Wei C.L."/>
            <person name="Yagi K."/>
            <person name="Yamanishi H."/>
            <person name="Zabarovsky E."/>
            <person name="Zhu S."/>
            <person name="Zimmer A."/>
            <person name="Hide W."/>
            <person name="Bult C."/>
            <person name="Grimmond S.M."/>
            <person name="Teasdale R.D."/>
            <person name="Liu E.T."/>
            <person name="Brusic V."/>
            <person name="Quackenbush J."/>
            <person name="Wahlestedt C."/>
            <person name="Mattick J.S."/>
            <person name="Hume D.A."/>
            <person name="Kai C."/>
            <person name="Sasaki D."/>
            <person name="Tomaru Y."/>
            <person name="Fukuda S."/>
            <person name="Kanamori-Katayama M."/>
            <person name="Suzuki M."/>
            <person name="Aoki J."/>
            <person name="Arakawa T."/>
            <person name="Iida J."/>
            <person name="Imamura K."/>
            <person name="Itoh M."/>
            <person name="Kato T."/>
            <person name="Kawaji H."/>
            <person name="Kawagashira N."/>
            <person name="Kawashima T."/>
            <person name="Kojima M."/>
            <person name="Kondo S."/>
            <person name="Konno H."/>
            <person name="Nakano K."/>
            <person name="Ninomiya N."/>
            <person name="Nishio T."/>
            <person name="Okada M."/>
            <person name="Plessy C."/>
            <person name="Shibata K."/>
            <person name="Shiraki T."/>
            <person name="Suzuki S."/>
            <person name="Tagami M."/>
            <person name="Waki K."/>
            <person name="Watahiki A."/>
            <person name="Okamura-Oho Y."/>
            <person name="Suzuki H."/>
            <person name="Kawai J."/>
            <person name="Hayashizaki Y."/>
        </authorList>
    </citation>
    <scope>NUCLEOTIDE SEQUENCE [LARGE SCALE MRNA]</scope>
    <source>
        <strain>C57BL/6J</strain>
    </source>
</reference>
<reference key="2">
    <citation type="journal article" date="2009" name="PLoS Biol.">
        <title>Lineage-specific biology revealed by a finished genome assembly of the mouse.</title>
        <authorList>
            <person name="Church D.M."/>
            <person name="Goodstadt L."/>
            <person name="Hillier L.W."/>
            <person name="Zody M.C."/>
            <person name="Goldstein S."/>
            <person name="She X."/>
            <person name="Bult C.J."/>
            <person name="Agarwala R."/>
            <person name="Cherry J.L."/>
            <person name="DiCuccio M."/>
            <person name="Hlavina W."/>
            <person name="Kapustin Y."/>
            <person name="Meric P."/>
            <person name="Maglott D."/>
            <person name="Birtle Z."/>
            <person name="Marques A.C."/>
            <person name="Graves T."/>
            <person name="Zhou S."/>
            <person name="Teague B."/>
            <person name="Potamousis K."/>
            <person name="Churas C."/>
            <person name="Place M."/>
            <person name="Herschleb J."/>
            <person name="Runnheim R."/>
            <person name="Forrest D."/>
            <person name="Amos-Landgraf J."/>
            <person name="Schwartz D.C."/>
            <person name="Cheng Z."/>
            <person name="Lindblad-Toh K."/>
            <person name="Eichler E.E."/>
            <person name="Ponting C.P."/>
        </authorList>
    </citation>
    <scope>NUCLEOTIDE SEQUENCE [LARGE SCALE GENOMIC DNA]</scope>
    <source>
        <strain>C57BL/6J</strain>
    </source>
</reference>
<reference key="3">
    <citation type="journal article" date="2004" name="Genome Res.">
        <title>The status, quality, and expansion of the NIH full-length cDNA project: the Mammalian Gene Collection (MGC).</title>
        <authorList>
            <consortium name="The MGC Project Team"/>
        </authorList>
    </citation>
    <scope>NUCLEOTIDE SEQUENCE [LARGE SCALE MRNA]</scope>
</reference>
<reference key="4">
    <citation type="journal article" date="2006" name="EMBO J.">
        <title>Sws1 is a conserved regulator of homologous recombination in eukaryotic cells.</title>
        <authorList>
            <person name="Martin V."/>
            <person name="Chahwan C."/>
            <person name="Gao H."/>
            <person name="Blais V."/>
            <person name="Wohlschlegel J."/>
            <person name="Yates J.R. III"/>
            <person name="McGowan C.H."/>
            <person name="Russell P."/>
        </authorList>
    </citation>
    <scope>IDENTIFICATION</scope>
</reference>
<reference key="5">
    <citation type="journal article" date="2021" name="Hum. Reprod.">
        <title>A recurrent ZSWIM7 mutation causes male infertility resulting from decreased meiotic recombination.</title>
        <authorList>
            <person name="Li Y."/>
            <person name="Wu Y."/>
            <person name="Zhou J."/>
            <person name="Zhang H."/>
            <person name="Zhang Y."/>
            <person name="Ma H."/>
            <person name="Jiang X."/>
            <person name="Shi Q."/>
        </authorList>
    </citation>
    <scope>FUNCTION</scope>
</reference>
<gene>
    <name type="primary">Zswim7</name>
    <name type="synonym">Sws1</name>
</gene>
<evidence type="ECO:0000250" key="1"/>
<evidence type="ECO:0000250" key="2">
    <source>
        <dbReference type="UniProtKB" id="Q19AV6"/>
    </source>
</evidence>
<evidence type="ECO:0000255" key="3">
    <source>
        <dbReference type="PROSITE-ProRule" id="PRU00325"/>
    </source>
</evidence>
<evidence type="ECO:0000269" key="4">
    <source>
    </source>
</evidence>
<evidence type="ECO:0000305" key="5"/>
<feature type="chain" id="PRO_0000307404" description="Zinc finger SWIM domain-containing protein 7">
    <location>
        <begin position="1"/>
        <end position="152"/>
    </location>
</feature>
<feature type="zinc finger region" description="SWIM-type" evidence="3">
    <location>
        <begin position="76"/>
        <end position="114"/>
    </location>
</feature>
<dbReference type="EMBL" id="AK010472">
    <property type="protein sequence ID" value="BAB26965.1"/>
    <property type="molecule type" value="mRNA"/>
</dbReference>
<dbReference type="EMBL" id="AL596110">
    <property type="status" value="NOT_ANNOTATED_CDS"/>
    <property type="molecule type" value="Genomic_DNA"/>
</dbReference>
<dbReference type="EMBL" id="BC109343">
    <property type="protein sequence ID" value="AAI09344.1"/>
    <property type="molecule type" value="mRNA"/>
</dbReference>
<dbReference type="CCDS" id="CCDS48816.1"/>
<dbReference type="RefSeq" id="NP_081474.1">
    <property type="nucleotide sequence ID" value="NM_027198.1"/>
</dbReference>
<dbReference type="FunCoup" id="Q9CWQ2">
    <property type="interactions" value="15"/>
</dbReference>
<dbReference type="STRING" id="10090.ENSMUSP00000072688"/>
<dbReference type="PhosphoSitePlus" id="Q9CWQ2"/>
<dbReference type="PaxDb" id="10090-ENSMUSP00000072688"/>
<dbReference type="ProteomicsDB" id="275318"/>
<dbReference type="Antibodypedia" id="58364">
    <property type="antibodies" value="13 antibodies from 7 providers"/>
</dbReference>
<dbReference type="Ensembl" id="ENSMUST00000072916.5">
    <property type="protein sequence ID" value="ENSMUSP00000072688.5"/>
    <property type="gene ID" value="ENSMUSG00000014243.6"/>
</dbReference>
<dbReference type="GeneID" id="69747"/>
<dbReference type="KEGG" id="mmu:69747"/>
<dbReference type="UCSC" id="uc007jip.2">
    <property type="organism name" value="mouse"/>
</dbReference>
<dbReference type="AGR" id="MGI:1916997"/>
<dbReference type="CTD" id="125150"/>
<dbReference type="MGI" id="MGI:1916997">
    <property type="gene designation" value="Zswim7"/>
</dbReference>
<dbReference type="VEuPathDB" id="HostDB:ENSMUSG00000014243"/>
<dbReference type="eggNOG" id="ENOG502RZB5">
    <property type="taxonomic scope" value="Eukaryota"/>
</dbReference>
<dbReference type="GeneTree" id="ENSGT00390000017523"/>
<dbReference type="HOGENOM" id="CLU_132858_2_0_1"/>
<dbReference type="InParanoid" id="Q9CWQ2"/>
<dbReference type="OMA" id="YTCYTSC"/>
<dbReference type="OrthoDB" id="337581at2759"/>
<dbReference type="PhylomeDB" id="Q9CWQ2"/>
<dbReference type="TreeFam" id="TF339438"/>
<dbReference type="BioGRID-ORCS" id="69747">
    <property type="hits" value="7 hits in 114 CRISPR screens"/>
</dbReference>
<dbReference type="ChiTaRS" id="Zswim7">
    <property type="organism name" value="mouse"/>
</dbReference>
<dbReference type="PRO" id="PR:Q9CWQ2"/>
<dbReference type="Proteomes" id="UP000000589">
    <property type="component" value="Chromosome 11"/>
</dbReference>
<dbReference type="RNAct" id="Q9CWQ2">
    <property type="molecule type" value="protein"/>
</dbReference>
<dbReference type="Bgee" id="ENSMUSG00000014243">
    <property type="expression patterns" value="Expressed in hindlimb stylopod muscle and 251 other cell types or tissues"/>
</dbReference>
<dbReference type="GO" id="GO:0005634">
    <property type="term" value="C:nucleus"/>
    <property type="evidence" value="ECO:0007669"/>
    <property type="project" value="UniProtKB-SubCell"/>
</dbReference>
<dbReference type="GO" id="GO:0097196">
    <property type="term" value="C:Shu complex"/>
    <property type="evidence" value="ECO:0007669"/>
    <property type="project" value="Ensembl"/>
</dbReference>
<dbReference type="GO" id="GO:0008270">
    <property type="term" value="F:zinc ion binding"/>
    <property type="evidence" value="ECO:0007669"/>
    <property type="project" value="UniProtKB-KW"/>
</dbReference>
<dbReference type="GO" id="GO:0000724">
    <property type="term" value="P:double-strand break repair via homologous recombination"/>
    <property type="evidence" value="ECO:0000250"/>
    <property type="project" value="UniProtKB"/>
</dbReference>
<dbReference type="GO" id="GO:0050821">
    <property type="term" value="P:protein stabilization"/>
    <property type="evidence" value="ECO:0007669"/>
    <property type="project" value="Ensembl"/>
</dbReference>
<dbReference type="InterPro" id="IPR007527">
    <property type="entry name" value="Znf_SWIM"/>
</dbReference>
<dbReference type="PANTHER" id="PTHR28498">
    <property type="entry name" value="ZINC FINGER SWIM DOMAIN-CONTAINING PROTEIN 7"/>
    <property type="match status" value="1"/>
</dbReference>
<dbReference type="PANTHER" id="PTHR28498:SF1">
    <property type="entry name" value="ZINC FINGER SWIM DOMAIN-CONTAINING PROTEIN 7"/>
    <property type="match status" value="1"/>
</dbReference>
<dbReference type="Pfam" id="PF04434">
    <property type="entry name" value="SWIM"/>
    <property type="match status" value="1"/>
</dbReference>
<dbReference type="PROSITE" id="PS50966">
    <property type="entry name" value="ZF_SWIM"/>
    <property type="match status" value="1"/>
</dbReference>
<name>ZSWM7_MOUSE</name>
<comment type="function">
    <text evidence="2 4">Involved in early stages of the homologous recombination repair (HRR) pathway of double-stranded DNA breaks arising during DNA replication or induced by DNA-damaging agents (By similarity). Required for meiotic progression, hence for fertility (PubMed:33713115).</text>
</comment>
<comment type="subunit">
    <text evidence="1">Interacts with RAD51D and XRCC3; involved in homologous recombination repair. Interacts with SWSAP1; they form a functional complex involved in homologous recombination repair and stabilize each other (By similarity).</text>
</comment>
<comment type="subcellular location">
    <subcellularLocation>
        <location evidence="1">Nucleus</location>
    </subcellularLocation>
</comment>
<comment type="similarity">
    <text evidence="5">Belongs to the SWS1 family.</text>
</comment>
<accession>Q9CWQ2</accession>